<feature type="signal peptide" evidence="1">
    <location>
        <begin position="1"/>
        <end position="16"/>
    </location>
</feature>
<feature type="chain" id="PRO_0000021979" description="OV-17 antigen">
    <location>
        <begin position="17"/>
        <end position="164"/>
    </location>
</feature>
<feature type="region of interest" description="Disordered" evidence="2">
    <location>
        <begin position="24"/>
        <end position="43"/>
    </location>
</feature>
<protein>
    <recommendedName>
        <fullName>OV-17 antigen</fullName>
    </recommendedName>
    <alternativeName>
        <fullName>Immunodominant hypodermal antigen</fullName>
    </alternativeName>
</protein>
<comment type="tissue specificity">
    <text>High levels in the hypodermal layer of the adult female.</text>
</comment>
<comment type="developmental stage">
    <text>Present in larvae and in adult parasites.</text>
</comment>
<comment type="similarity">
    <text evidence="3">Belongs to the SXP/RAL-2 family.</text>
</comment>
<organism>
    <name type="scientific">Onchocerca volvulus</name>
    <dbReference type="NCBI Taxonomy" id="6282"/>
    <lineage>
        <taxon>Eukaryota</taxon>
        <taxon>Metazoa</taxon>
        <taxon>Ecdysozoa</taxon>
        <taxon>Nematoda</taxon>
        <taxon>Chromadorea</taxon>
        <taxon>Rhabditida</taxon>
        <taxon>Spirurina</taxon>
        <taxon>Spiruromorpha</taxon>
        <taxon>Filarioidea</taxon>
        <taxon>Onchocercidae</taxon>
        <taxon>Onchocerca</taxon>
    </lineage>
</organism>
<dbReference type="EMBL" id="U00693">
    <property type="protein sequence ID" value="AAA18283.1"/>
    <property type="molecule type" value="mRNA"/>
</dbReference>
<dbReference type="PIR" id="A60758">
    <property type="entry name" value="A60758"/>
</dbReference>
<dbReference type="SMR" id="P36991"/>
<dbReference type="EnsemblMetazoa" id="OVOC9988.1">
    <property type="protein sequence ID" value="OVOC9988.1"/>
    <property type="gene ID" value="WBGene00246797"/>
</dbReference>
<dbReference type="HOGENOM" id="CLU_1621016_0_0_1"/>
<dbReference type="OMA" id="DAQIDQK"/>
<dbReference type="Proteomes" id="UP000024404">
    <property type="component" value="Unassembled WGS sequence"/>
</dbReference>
<dbReference type="InterPro" id="IPR003677">
    <property type="entry name" value="ANIS5_cation-bd"/>
</dbReference>
<dbReference type="InterPro" id="IPR052823">
    <property type="entry name" value="SXP/RAL-2_related"/>
</dbReference>
<dbReference type="PANTHER" id="PTHR21593:SF36">
    <property type="entry name" value="DUF148 DOMAIN-CONTAINING PROTEIN-RELATED"/>
    <property type="match status" value="1"/>
</dbReference>
<dbReference type="PANTHER" id="PTHR21593">
    <property type="entry name" value="PRION-LIKE- Q/N-RICH -DOMAIN-BEARING PROTEIN PROTEIN"/>
    <property type="match status" value="1"/>
</dbReference>
<dbReference type="Pfam" id="PF02520">
    <property type="entry name" value="ANIS5_cation-bd"/>
    <property type="match status" value="1"/>
</dbReference>
<keyword id="KW-1185">Reference proteome</keyword>
<keyword id="KW-0732">Signal</keyword>
<gene>
    <name type="primary">OV17</name>
</gene>
<reference key="1">
    <citation type="journal article" date="1993" name="Exp. Parasitol.">
        <title>Onchocerca volvulus: characterization of an immunodominant hypodermal antigen present in adult and larval parasites.</title>
        <authorList>
            <person name="Bradley J.E."/>
            <person name="Tuan R.S."/>
            <person name="Shepley K.J."/>
            <person name="Tree T.I.M."/>
            <person name="Maizels R.M."/>
            <person name="Helm R."/>
            <person name="Gregory W.F."/>
            <person name="Unnasch T.R."/>
        </authorList>
    </citation>
    <scope>NUCLEOTIDE SEQUENCE [MRNA]</scope>
    <source>
        <strain>L3 / Rainforest</strain>
    </source>
</reference>
<accession>P36991</accession>
<evidence type="ECO:0000255" key="1"/>
<evidence type="ECO:0000256" key="2">
    <source>
        <dbReference type="SAM" id="MobiDB-lite"/>
    </source>
</evidence>
<evidence type="ECO:0000305" key="3"/>
<sequence>MKFVILLTIGLLVVAAIPQRRQQQQQQQQQQQRDEREIPPFLEGAPPSVIDEFYNLLKTDENKTDQQTEADVEAFINRLGGSYKVRFTQFMEEVKKARADYERIHQQAVARFSPAAKDADARMSAIADSPHLTTRQKSQQIQAIMDSLSESVRREIINALSPQE</sequence>
<name>OV17_ONCVO</name>
<proteinExistence type="evidence at transcript level"/>